<organism>
    <name type="scientific">Yersinia pestis</name>
    <dbReference type="NCBI Taxonomy" id="632"/>
    <lineage>
        <taxon>Bacteria</taxon>
        <taxon>Pseudomonadati</taxon>
        <taxon>Pseudomonadota</taxon>
        <taxon>Gammaproteobacteria</taxon>
        <taxon>Enterobacterales</taxon>
        <taxon>Yersiniaceae</taxon>
        <taxon>Yersinia</taxon>
    </lineage>
</organism>
<accession>Q74RF9</accession>
<accession>Q0WAU2</accession>
<accession>Q8D1U0</accession>
<accession>Q8ZAS5</accession>
<name>MALF_YERPE</name>
<keyword id="KW-0997">Cell inner membrane</keyword>
<keyword id="KW-1003">Cell membrane</keyword>
<keyword id="KW-0472">Membrane</keyword>
<keyword id="KW-1185">Reference proteome</keyword>
<keyword id="KW-0762">Sugar transport</keyword>
<keyword id="KW-0812">Transmembrane</keyword>
<keyword id="KW-1133">Transmembrane helix</keyword>
<keyword id="KW-0813">Transport</keyword>
<proteinExistence type="inferred from homology"/>
<protein>
    <recommendedName>
        <fullName evidence="1">Maltose/maltodextrin transport system permease protein MalF</fullName>
    </recommendedName>
</protein>
<dbReference type="EMBL" id="AL590842">
    <property type="protein sequence ID" value="CAL22302.1"/>
    <property type="status" value="ALT_INIT"/>
    <property type="molecule type" value="Genomic_DNA"/>
</dbReference>
<dbReference type="EMBL" id="AE009952">
    <property type="protein sequence ID" value="AAM83622.1"/>
    <property type="molecule type" value="Genomic_DNA"/>
</dbReference>
<dbReference type="EMBL" id="AE017042">
    <property type="protein sequence ID" value="AAS63248.1"/>
    <property type="molecule type" value="Genomic_DNA"/>
</dbReference>
<dbReference type="PIR" id="AC0452">
    <property type="entry name" value="AC0452"/>
</dbReference>
<dbReference type="RefSeq" id="YP_002348596.1">
    <property type="nucleotide sequence ID" value="NC_003143.1"/>
</dbReference>
<dbReference type="SMR" id="Q74RF9"/>
<dbReference type="STRING" id="214092.YPO3715"/>
<dbReference type="PaxDb" id="214092-YPO3715"/>
<dbReference type="DNASU" id="1144974"/>
<dbReference type="EnsemblBacteria" id="AAS63248">
    <property type="protein sequence ID" value="AAS63248"/>
    <property type="gene ID" value="YP_3077"/>
</dbReference>
<dbReference type="KEGG" id="ype:YPO3715"/>
<dbReference type="KEGG" id="ypk:y0027"/>
<dbReference type="KEGG" id="ypm:YP_3077"/>
<dbReference type="PATRIC" id="fig|214092.21.peg.4225"/>
<dbReference type="eggNOG" id="COG1175">
    <property type="taxonomic scope" value="Bacteria"/>
</dbReference>
<dbReference type="HOGENOM" id="CLU_016047_20_0_6"/>
<dbReference type="Proteomes" id="UP000000815">
    <property type="component" value="Chromosome"/>
</dbReference>
<dbReference type="Proteomes" id="UP000001019">
    <property type="component" value="Chromosome"/>
</dbReference>
<dbReference type="Proteomes" id="UP000002490">
    <property type="component" value="Chromosome"/>
</dbReference>
<dbReference type="GO" id="GO:1990060">
    <property type="term" value="C:maltose transport complex"/>
    <property type="evidence" value="ECO:0000318"/>
    <property type="project" value="GO_Central"/>
</dbReference>
<dbReference type="GO" id="GO:0015423">
    <property type="term" value="F:ABC-type maltose transporter activity"/>
    <property type="evidence" value="ECO:0000318"/>
    <property type="project" value="GO_Central"/>
</dbReference>
<dbReference type="GO" id="GO:0042956">
    <property type="term" value="P:maltodextrin transmembrane transport"/>
    <property type="evidence" value="ECO:0000318"/>
    <property type="project" value="GO_Central"/>
</dbReference>
<dbReference type="CDD" id="cd06261">
    <property type="entry name" value="TM_PBP2"/>
    <property type="match status" value="1"/>
</dbReference>
<dbReference type="FunFam" id="1.10.3720.10:FF:000030">
    <property type="entry name" value="Maltose ABC transporter permease MalF"/>
    <property type="match status" value="1"/>
</dbReference>
<dbReference type="FunFam" id="1.20.58.370:FF:000001">
    <property type="entry name" value="Maltose ABC transporter permease MalF"/>
    <property type="match status" value="1"/>
</dbReference>
<dbReference type="Gene3D" id="2.40.430.10">
    <property type="entry name" value="D-maltodextrin-binding protein, MBP"/>
    <property type="match status" value="1"/>
</dbReference>
<dbReference type="Gene3D" id="1.20.58.370">
    <property type="entry name" value="MalF N-terminal region-like"/>
    <property type="match status" value="1"/>
</dbReference>
<dbReference type="Gene3D" id="3.10.650.10">
    <property type="entry name" value="MalF N-terminal region-like"/>
    <property type="match status" value="1"/>
</dbReference>
<dbReference type="Gene3D" id="1.10.3720.10">
    <property type="entry name" value="MetI-like"/>
    <property type="match status" value="1"/>
</dbReference>
<dbReference type="InterPro" id="IPR035277">
    <property type="entry name" value="MalF_N"/>
</dbReference>
<dbReference type="InterPro" id="IPR048464">
    <property type="entry name" value="MalF_N_TM"/>
</dbReference>
<dbReference type="InterPro" id="IPR029345">
    <property type="entry name" value="MalF_P2"/>
</dbReference>
<dbReference type="InterPro" id="IPR047103">
    <property type="entry name" value="MalF_P2_sf"/>
</dbReference>
<dbReference type="InterPro" id="IPR000515">
    <property type="entry name" value="MetI-like"/>
</dbReference>
<dbReference type="InterPro" id="IPR035906">
    <property type="entry name" value="MetI-like_sf"/>
</dbReference>
<dbReference type="NCBIfam" id="NF008232">
    <property type="entry name" value="PRK10999.1"/>
    <property type="match status" value="1"/>
</dbReference>
<dbReference type="PANTHER" id="PTHR47314">
    <property type="entry name" value="MALTOSE/MALTODEXTRIN TRANSPORT SYSTEM PERMEASE PROTEIN MALF"/>
    <property type="match status" value="1"/>
</dbReference>
<dbReference type="PANTHER" id="PTHR47314:SF1">
    <property type="entry name" value="MALTOSE_MALTODEXTRIN TRANSPORT SYSTEM PERMEASE PROTEIN MALF"/>
    <property type="match status" value="1"/>
</dbReference>
<dbReference type="Pfam" id="PF00528">
    <property type="entry name" value="BPD_transp_1"/>
    <property type="match status" value="1"/>
</dbReference>
<dbReference type="Pfam" id="PF20872">
    <property type="entry name" value="MalF_N_TM"/>
    <property type="match status" value="1"/>
</dbReference>
<dbReference type="Pfam" id="PF14785">
    <property type="entry name" value="MalF_P2"/>
    <property type="match status" value="1"/>
</dbReference>
<dbReference type="SUPFAM" id="SSF160964">
    <property type="entry name" value="MalF N-terminal region-like"/>
    <property type="match status" value="1"/>
</dbReference>
<dbReference type="SUPFAM" id="SSF161098">
    <property type="entry name" value="MetI-like"/>
    <property type="match status" value="1"/>
</dbReference>
<dbReference type="PROSITE" id="PS50928">
    <property type="entry name" value="ABC_TM1"/>
    <property type="match status" value="1"/>
</dbReference>
<sequence>MKGNIMQLSHTELQSRKKKIAWWQSDALKWLVISLLSLFTCYLIVLMYAQGEYLFAIVTLILVSLGLYVFANRRAYAWRYVYPGVAGMGLFVLFPLICTIAIAFTNYSSTNQLTFERAQSVLLDRQFQTGKTFTFGLYPSDNQWRLQLTNPDDGSLFISEPFSFEATGEQKVMVAPTNTAQTSEPASLRIITQSRQALSSLVAILPDGAELRMSSLRQFSGTKPLYTLGADGKELINQQTGVKYWPNPSTGFYQAVNADGQWENEKLSPGFTVSIGWKNFLRVLHDEGIQKPFISIFIWTILFSVMSVTFTVAVGMVLACVVQWDSLKGKAIYRVMLILPYAVPSFISILIFKGLFNQSFGEINLMLSHLFGIKPAWFSDPITAKSMILIVNTWLGYPYMMILCMGLLKAIPDDLYEASAMDGAGPFQNFFRITFPLLIKPLTPLMIASFAFNFNNFVLIQLLTNGGPDMIGTSTPAGYTDLLVNYTYRVAFEGEGGQDFGLAAAIATLIFILVGALAILNLKASKMNFD</sequence>
<evidence type="ECO:0000250" key="1">
    <source>
        <dbReference type="UniProtKB" id="P02916"/>
    </source>
</evidence>
<evidence type="ECO:0000255" key="2"/>
<evidence type="ECO:0000255" key="3">
    <source>
        <dbReference type="PROSITE-ProRule" id="PRU00441"/>
    </source>
</evidence>
<evidence type="ECO:0000305" key="4"/>
<comment type="function">
    <text evidence="1">Part of the ABC transporter complex MalEFGK involved in maltose/maltodextrin import. Probably responsible for the translocation of the substrate across the membrane.</text>
</comment>
<comment type="subunit">
    <text evidence="1">The complex is composed of two ATP-binding proteins (MalK), two transmembrane proteins (MalG and MalF) and a solute-binding protein (MalE).</text>
</comment>
<comment type="subcellular location">
    <subcellularLocation>
        <location evidence="1">Cell inner membrane</location>
        <topology evidence="1">Multi-pass membrane protein</topology>
    </subcellularLocation>
</comment>
<comment type="similarity">
    <text evidence="4">Belongs to the binding-protein-dependent transport system permease family. MalFG subfamily.</text>
</comment>
<comment type="sequence caution" evidence="4">
    <conflict type="erroneous initiation">
        <sequence resource="EMBL-CDS" id="CAL22302"/>
    </conflict>
</comment>
<feature type="chain" id="PRO_0000060080" description="Maltose/maltodextrin transport system permease protein MalF">
    <location>
        <begin position="1"/>
        <end position="530"/>
    </location>
</feature>
<feature type="topological domain" description="Cytoplasmic" evidence="2">
    <location>
        <begin position="1"/>
        <end position="26"/>
    </location>
</feature>
<feature type="transmembrane region" description="Helical" evidence="3">
    <location>
        <begin position="27"/>
        <end position="49"/>
    </location>
</feature>
<feature type="topological domain" description="Periplasmic" evidence="2">
    <location>
        <begin position="50"/>
        <end position="52"/>
    </location>
</feature>
<feature type="transmembrane region" description="Helical" evidence="3">
    <location>
        <begin position="53"/>
        <end position="70"/>
    </location>
</feature>
<feature type="topological domain" description="Cytoplasmic" evidence="2">
    <location>
        <begin position="71"/>
        <end position="82"/>
    </location>
</feature>
<feature type="transmembrane region" description="Helical" evidence="3">
    <location>
        <begin position="83"/>
        <end position="105"/>
    </location>
</feature>
<feature type="topological domain" description="Periplasmic" evidence="2">
    <location>
        <begin position="106"/>
        <end position="295"/>
    </location>
</feature>
<feature type="transmembrane region" description="Helical" evidence="3">
    <location>
        <begin position="296"/>
        <end position="318"/>
    </location>
</feature>
<feature type="topological domain" description="Cytoplasmic" evidence="2">
    <location>
        <begin position="319"/>
        <end position="330"/>
    </location>
</feature>
<feature type="transmembrane region" description="Helical" evidence="3">
    <location>
        <begin position="331"/>
        <end position="352"/>
    </location>
</feature>
<feature type="topological domain" description="Periplasmic" evidence="2">
    <location>
        <begin position="353"/>
        <end position="385"/>
    </location>
</feature>
<feature type="transmembrane region" description="Helical" evidence="3">
    <location>
        <begin position="386"/>
        <end position="408"/>
    </location>
</feature>
<feature type="topological domain" description="Cytoplasmic" evidence="2">
    <location>
        <begin position="409"/>
        <end position="428"/>
    </location>
</feature>
<feature type="transmembrane region" description="Helical" evidence="3">
    <location>
        <begin position="429"/>
        <end position="451"/>
    </location>
</feature>
<feature type="topological domain" description="Periplasmic" evidence="2">
    <location>
        <begin position="452"/>
        <end position="499"/>
    </location>
</feature>
<feature type="transmembrane region" description="Helical" evidence="3">
    <location>
        <begin position="500"/>
        <end position="522"/>
    </location>
</feature>
<feature type="topological domain" description="Cytoplasmic" evidence="2">
    <location>
        <begin position="523"/>
        <end position="530"/>
    </location>
</feature>
<feature type="domain" description="ABC transmembrane type-1" evidence="3">
    <location>
        <begin position="297"/>
        <end position="521"/>
    </location>
</feature>
<gene>
    <name type="primary">malF</name>
    <name type="ordered locus">YPO3715</name>
    <name type="ordered locus">y0027</name>
    <name type="ordered locus">YP_3077</name>
</gene>
<reference key="1">
    <citation type="journal article" date="2001" name="Nature">
        <title>Genome sequence of Yersinia pestis, the causative agent of plague.</title>
        <authorList>
            <person name="Parkhill J."/>
            <person name="Wren B.W."/>
            <person name="Thomson N.R."/>
            <person name="Titball R.W."/>
            <person name="Holden M.T.G."/>
            <person name="Prentice M.B."/>
            <person name="Sebaihia M."/>
            <person name="James K.D."/>
            <person name="Churcher C.M."/>
            <person name="Mungall K.L."/>
            <person name="Baker S."/>
            <person name="Basham D."/>
            <person name="Bentley S.D."/>
            <person name="Brooks K."/>
            <person name="Cerdeno-Tarraga A.-M."/>
            <person name="Chillingworth T."/>
            <person name="Cronin A."/>
            <person name="Davies R.M."/>
            <person name="Davis P."/>
            <person name="Dougan G."/>
            <person name="Feltwell T."/>
            <person name="Hamlin N."/>
            <person name="Holroyd S."/>
            <person name="Jagels K."/>
            <person name="Karlyshev A.V."/>
            <person name="Leather S."/>
            <person name="Moule S."/>
            <person name="Oyston P.C.F."/>
            <person name="Quail M.A."/>
            <person name="Rutherford K.M."/>
            <person name="Simmonds M."/>
            <person name="Skelton J."/>
            <person name="Stevens K."/>
            <person name="Whitehead S."/>
            <person name="Barrell B.G."/>
        </authorList>
    </citation>
    <scope>NUCLEOTIDE SEQUENCE [LARGE SCALE GENOMIC DNA]</scope>
    <source>
        <strain>CO-92 / Biovar Orientalis</strain>
    </source>
</reference>
<reference key="2">
    <citation type="journal article" date="2002" name="J. Bacteriol.">
        <title>Genome sequence of Yersinia pestis KIM.</title>
        <authorList>
            <person name="Deng W."/>
            <person name="Burland V."/>
            <person name="Plunkett G. III"/>
            <person name="Boutin A."/>
            <person name="Mayhew G.F."/>
            <person name="Liss P."/>
            <person name="Perna N.T."/>
            <person name="Rose D.J."/>
            <person name="Mau B."/>
            <person name="Zhou S."/>
            <person name="Schwartz D.C."/>
            <person name="Fetherston J.D."/>
            <person name="Lindler L.E."/>
            <person name="Brubaker R.R."/>
            <person name="Plano G.V."/>
            <person name="Straley S.C."/>
            <person name="McDonough K.A."/>
            <person name="Nilles M.L."/>
            <person name="Matson J.S."/>
            <person name="Blattner F.R."/>
            <person name="Perry R.D."/>
        </authorList>
    </citation>
    <scope>NUCLEOTIDE SEQUENCE [LARGE SCALE GENOMIC DNA]</scope>
    <source>
        <strain>KIM10+ / Biovar Mediaevalis</strain>
    </source>
</reference>
<reference key="3">
    <citation type="journal article" date="2004" name="DNA Res.">
        <title>Complete genome sequence of Yersinia pestis strain 91001, an isolate avirulent to humans.</title>
        <authorList>
            <person name="Song Y."/>
            <person name="Tong Z."/>
            <person name="Wang J."/>
            <person name="Wang L."/>
            <person name="Guo Z."/>
            <person name="Han Y."/>
            <person name="Zhang J."/>
            <person name="Pei D."/>
            <person name="Zhou D."/>
            <person name="Qin H."/>
            <person name="Pang X."/>
            <person name="Han Y."/>
            <person name="Zhai J."/>
            <person name="Li M."/>
            <person name="Cui B."/>
            <person name="Qi Z."/>
            <person name="Jin L."/>
            <person name="Dai R."/>
            <person name="Chen F."/>
            <person name="Li S."/>
            <person name="Ye C."/>
            <person name="Du Z."/>
            <person name="Lin W."/>
            <person name="Wang J."/>
            <person name="Yu J."/>
            <person name="Yang H."/>
            <person name="Wang J."/>
            <person name="Huang P."/>
            <person name="Yang R."/>
        </authorList>
    </citation>
    <scope>NUCLEOTIDE SEQUENCE [LARGE SCALE GENOMIC DNA]</scope>
    <source>
        <strain>91001 / Biovar Mediaevalis</strain>
    </source>
</reference>